<reference key="1">
    <citation type="journal article" date="2009" name="PLoS Genet.">
        <title>Organised genome dynamics in the Escherichia coli species results in highly diverse adaptive paths.</title>
        <authorList>
            <person name="Touchon M."/>
            <person name="Hoede C."/>
            <person name="Tenaillon O."/>
            <person name="Barbe V."/>
            <person name="Baeriswyl S."/>
            <person name="Bidet P."/>
            <person name="Bingen E."/>
            <person name="Bonacorsi S."/>
            <person name="Bouchier C."/>
            <person name="Bouvet O."/>
            <person name="Calteau A."/>
            <person name="Chiapello H."/>
            <person name="Clermont O."/>
            <person name="Cruveiller S."/>
            <person name="Danchin A."/>
            <person name="Diard M."/>
            <person name="Dossat C."/>
            <person name="Karoui M.E."/>
            <person name="Frapy E."/>
            <person name="Garry L."/>
            <person name="Ghigo J.M."/>
            <person name="Gilles A.M."/>
            <person name="Johnson J."/>
            <person name="Le Bouguenec C."/>
            <person name="Lescat M."/>
            <person name="Mangenot S."/>
            <person name="Martinez-Jehanne V."/>
            <person name="Matic I."/>
            <person name="Nassif X."/>
            <person name="Oztas S."/>
            <person name="Petit M.A."/>
            <person name="Pichon C."/>
            <person name="Rouy Z."/>
            <person name="Ruf C.S."/>
            <person name="Schneider D."/>
            <person name="Tourret J."/>
            <person name="Vacherie B."/>
            <person name="Vallenet D."/>
            <person name="Medigue C."/>
            <person name="Rocha E.P.C."/>
            <person name="Denamur E."/>
        </authorList>
    </citation>
    <scope>NUCLEOTIDE SEQUENCE [LARGE SCALE GENOMIC DNA]</scope>
    <source>
        <strain>ED1a</strain>
    </source>
</reference>
<evidence type="ECO:0000255" key="1">
    <source>
        <dbReference type="HAMAP-Rule" id="MF_01832"/>
    </source>
</evidence>
<proteinExistence type="inferred from homology"/>
<accession>B7MVF5</accession>
<organism>
    <name type="scientific">Escherichia coli O81 (strain ED1a)</name>
    <dbReference type="NCBI Taxonomy" id="585397"/>
    <lineage>
        <taxon>Bacteria</taxon>
        <taxon>Pseudomonadati</taxon>
        <taxon>Pseudomonadota</taxon>
        <taxon>Gammaproteobacteria</taxon>
        <taxon>Enterobacterales</taxon>
        <taxon>Enterobacteriaceae</taxon>
        <taxon>Escherichia</taxon>
    </lineage>
</organism>
<gene>
    <name evidence="1" type="primary">sufE</name>
    <name type="ordered locus">ECED1_1878</name>
</gene>
<dbReference type="EMBL" id="CU928162">
    <property type="protein sequence ID" value="CAR08071.2"/>
    <property type="molecule type" value="Genomic_DNA"/>
</dbReference>
<dbReference type="RefSeq" id="WP_001196522.1">
    <property type="nucleotide sequence ID" value="NC_011745.1"/>
</dbReference>
<dbReference type="SMR" id="B7MVF5"/>
<dbReference type="KEGG" id="ecq:ECED1_1878"/>
<dbReference type="HOGENOM" id="CLU_124502_1_1_6"/>
<dbReference type="UniPathway" id="UPA00266"/>
<dbReference type="Proteomes" id="UP000000748">
    <property type="component" value="Chromosome"/>
</dbReference>
<dbReference type="GO" id="GO:0005737">
    <property type="term" value="C:cytoplasm"/>
    <property type="evidence" value="ECO:0007669"/>
    <property type="project" value="UniProtKB-SubCell"/>
</dbReference>
<dbReference type="GO" id="GO:0016226">
    <property type="term" value="P:iron-sulfur cluster assembly"/>
    <property type="evidence" value="ECO:0007669"/>
    <property type="project" value="InterPro"/>
</dbReference>
<dbReference type="GO" id="GO:0006790">
    <property type="term" value="P:sulfur compound metabolic process"/>
    <property type="evidence" value="ECO:0007669"/>
    <property type="project" value="InterPro"/>
</dbReference>
<dbReference type="FunFam" id="3.90.1010.10:FF:000004">
    <property type="entry name" value="Cysteine desulfuration protein SufE"/>
    <property type="match status" value="1"/>
</dbReference>
<dbReference type="Gene3D" id="3.90.1010.10">
    <property type="match status" value="1"/>
</dbReference>
<dbReference type="HAMAP" id="MF_01832">
    <property type="entry name" value="SufE"/>
    <property type="match status" value="1"/>
</dbReference>
<dbReference type="InterPro" id="IPR023939">
    <property type="entry name" value="Cysteine_desulfuration_SufE"/>
</dbReference>
<dbReference type="InterPro" id="IPR003808">
    <property type="entry name" value="Fe-S_metab-assoc_dom"/>
</dbReference>
<dbReference type="NCBIfam" id="NF006792">
    <property type="entry name" value="PRK09296.1"/>
    <property type="match status" value="1"/>
</dbReference>
<dbReference type="PANTHER" id="PTHR43597:SF3">
    <property type="entry name" value="CYSTEINE DESULFURATION PROTEIN SUFE"/>
    <property type="match status" value="1"/>
</dbReference>
<dbReference type="PANTHER" id="PTHR43597">
    <property type="entry name" value="SULFUR ACCEPTOR PROTEIN CSDE"/>
    <property type="match status" value="1"/>
</dbReference>
<dbReference type="Pfam" id="PF02657">
    <property type="entry name" value="SufE"/>
    <property type="match status" value="1"/>
</dbReference>
<dbReference type="SUPFAM" id="SSF82649">
    <property type="entry name" value="SufE/NifU"/>
    <property type="match status" value="1"/>
</dbReference>
<name>SUFE_ECO81</name>
<comment type="function">
    <text evidence="1">Participates in cysteine desulfuration mediated by SufS. Cysteine desulfuration mobilizes sulfur from L-cysteine to yield L-alanine and constitutes an essential step in sulfur metabolism for biosynthesis of a variety of sulfur-containing biomolecules. Functions as a sulfur acceptor for SufS, by mediating the direct transfer of the sulfur atom from the S-sulfanylcysteine of SufS, an intermediate product of cysteine desulfuration process.</text>
</comment>
<comment type="pathway">
    <text evidence="1">Cofactor biosynthesis; iron-sulfur cluster biosynthesis.</text>
</comment>
<comment type="subunit">
    <text evidence="1">Homodimer. Interacts with SufS.</text>
</comment>
<comment type="subcellular location">
    <subcellularLocation>
        <location evidence="1">Cytoplasm</location>
    </subcellularLocation>
</comment>
<comment type="similarity">
    <text evidence="1">Belongs to the SufE family.</text>
</comment>
<sequence>MALLPDKEKLLRNFLRCANWEEKYLYIIELGQRLPELRDEDKSPQNSIQGCQSQVWIVMRQNAQGIIELQGDSDAAIVKGLIAVVFILYDQMTPQDIVNFDVRPWFEKMALTQHLTPSRSQGLEAMIRAIRAKAAALS</sequence>
<keyword id="KW-0963">Cytoplasm</keyword>
<protein>
    <recommendedName>
        <fullName evidence="1">Cysteine desulfuration protein SufE</fullName>
    </recommendedName>
</protein>
<feature type="chain" id="PRO_1000188322" description="Cysteine desulfuration protein SufE">
    <location>
        <begin position="1"/>
        <end position="138"/>
    </location>
</feature>
<feature type="active site" description="Cysteine persulfide intermediate" evidence="1">
    <location>
        <position position="51"/>
    </location>
</feature>